<proteinExistence type="inferred from homology"/>
<accession>Q74N45</accession>
<evidence type="ECO:0000255" key="1">
    <source>
        <dbReference type="HAMAP-Rule" id="MF_01470"/>
    </source>
</evidence>
<comment type="function">
    <text evidence="1">CRISPR (clustered regularly interspaced short palindromic repeat), is an adaptive immune system that provides protection against mobile genetic elements (viruses, transposable elements and conjugative plasmids). CRISPR clusters contain spacers, sequences complementary to antecedent mobile elements, and target invading nucleic acids. CRISPR clusters are transcribed and processed into CRISPR RNA (crRNA). Acts as a dsDNA endonuclease. Involved in the integration of spacer DNA into the CRISPR cassette.</text>
</comment>
<comment type="cofactor">
    <cofactor evidence="1">
        <name>Mg(2+)</name>
        <dbReference type="ChEBI" id="CHEBI:18420"/>
    </cofactor>
    <cofactor evidence="1">
        <name>Mn(2+)</name>
        <dbReference type="ChEBI" id="CHEBI:29035"/>
    </cofactor>
</comment>
<comment type="subunit">
    <text evidence="1">Homodimer, forms a heterotetramer with a Cas2 homodimer.</text>
</comment>
<comment type="similarity">
    <text evidence="1">Belongs to the CRISPR-associated endonuclease Cas1 family.</text>
</comment>
<keyword id="KW-0051">Antiviral defense</keyword>
<keyword id="KW-0238">DNA-binding</keyword>
<keyword id="KW-0255">Endonuclease</keyword>
<keyword id="KW-0378">Hydrolase</keyword>
<keyword id="KW-0460">Magnesium</keyword>
<keyword id="KW-0464">Manganese</keyword>
<keyword id="KW-0479">Metal-binding</keyword>
<keyword id="KW-0540">Nuclease</keyword>
<keyword id="KW-1185">Reference proteome</keyword>
<organism>
    <name type="scientific">Nanoarchaeum equitans (strain Kin4-M)</name>
    <dbReference type="NCBI Taxonomy" id="228908"/>
    <lineage>
        <taxon>Archaea</taxon>
        <taxon>Nanobdellota</taxon>
        <taxon>Candidatus Nanoarchaeia</taxon>
        <taxon>Nanoarchaeales</taxon>
        <taxon>Nanoarchaeaceae</taxon>
        <taxon>Nanoarchaeum</taxon>
    </lineage>
</organism>
<sequence>MKTIYILSIGKLYRGKNGLYFINKDKKKSPIPLESIKEIFILNKVSVTYNALKLLADRNIPIHFFYENTKKGISYYLGSFLPRQKTKSGLVLVKQVEAYKDIEKRTEIALEIVDAIRYNCIKVLEKYHIDEVKELRKIDVWKMFEESLNDWKDAINIIRGIESNIWNLFYQGLDKILKLYKLERRTRRPPKNEANTIVSFANTLLYGVTLTEIYKTHLDPTISFLHELRDTRYSLALDLSENFKPIITFRILIWLVNQGIIKDTHFVKGLNGVLLNEQGKKLVIKEFNKRLDETIKLKSGLKRSMRWYIKAQAYNLERFLLDGRKFKAFRLIY</sequence>
<reference key="1">
    <citation type="journal article" date="2003" name="Proc. Natl. Acad. Sci. U.S.A.">
        <title>The genome of Nanoarchaeum equitans: insights into early archaeal evolution and derived parasitism.</title>
        <authorList>
            <person name="Waters E."/>
            <person name="Hohn M.J."/>
            <person name="Ahel I."/>
            <person name="Graham D.E."/>
            <person name="Adams M.D."/>
            <person name="Barnstead M."/>
            <person name="Beeson K.Y."/>
            <person name="Bibbs L."/>
            <person name="Bolanos R."/>
            <person name="Keller M."/>
            <person name="Kretz K."/>
            <person name="Lin X."/>
            <person name="Mathur E."/>
            <person name="Ni J."/>
            <person name="Podar M."/>
            <person name="Richardson T."/>
            <person name="Sutton G.G."/>
            <person name="Simon M."/>
            <person name="Soell D."/>
            <person name="Stetter K.O."/>
            <person name="Short J.M."/>
            <person name="Noorderwier M."/>
        </authorList>
    </citation>
    <scope>NUCLEOTIDE SEQUENCE [LARGE SCALE GENOMIC DNA]</scope>
    <source>
        <strain>Kin4-M</strain>
    </source>
</reference>
<gene>
    <name evidence="1" type="primary">cas1</name>
    <name type="ordered locus">NEQ017</name>
</gene>
<name>CAS1_NANEQ</name>
<dbReference type="EC" id="3.1.-.-" evidence="1"/>
<dbReference type="EMBL" id="AE017199">
    <property type="protein sequence ID" value="AAR38872.1"/>
    <property type="molecule type" value="Genomic_DNA"/>
</dbReference>
<dbReference type="SMR" id="Q74N45"/>
<dbReference type="STRING" id="228908.NEQ017"/>
<dbReference type="EnsemblBacteria" id="AAR38872">
    <property type="protein sequence ID" value="AAR38872"/>
    <property type="gene ID" value="NEQ017"/>
</dbReference>
<dbReference type="KEGG" id="neq:NEQ017"/>
<dbReference type="PATRIC" id="fig|228908.8.peg.16"/>
<dbReference type="HOGENOM" id="CLU_052779_2_0_2"/>
<dbReference type="Proteomes" id="UP000000578">
    <property type="component" value="Chromosome"/>
</dbReference>
<dbReference type="GO" id="GO:0003677">
    <property type="term" value="F:DNA binding"/>
    <property type="evidence" value="ECO:0007669"/>
    <property type="project" value="UniProtKB-KW"/>
</dbReference>
<dbReference type="GO" id="GO:0004520">
    <property type="term" value="F:DNA endonuclease activity"/>
    <property type="evidence" value="ECO:0007669"/>
    <property type="project" value="InterPro"/>
</dbReference>
<dbReference type="GO" id="GO:0046872">
    <property type="term" value="F:metal ion binding"/>
    <property type="evidence" value="ECO:0007669"/>
    <property type="project" value="UniProtKB-UniRule"/>
</dbReference>
<dbReference type="GO" id="GO:0051607">
    <property type="term" value="P:defense response to virus"/>
    <property type="evidence" value="ECO:0007669"/>
    <property type="project" value="UniProtKB-UniRule"/>
</dbReference>
<dbReference type="GO" id="GO:0043571">
    <property type="term" value="P:maintenance of CRISPR repeat elements"/>
    <property type="evidence" value="ECO:0007669"/>
    <property type="project" value="UniProtKB-UniRule"/>
</dbReference>
<dbReference type="Gene3D" id="1.20.120.920">
    <property type="entry name" value="CRISPR-associated endonuclease Cas1, C-terminal domain"/>
    <property type="match status" value="1"/>
</dbReference>
<dbReference type="Gene3D" id="3.100.10.20">
    <property type="entry name" value="CRISPR-associated endonuclease Cas1, N-terminal domain"/>
    <property type="match status" value="1"/>
</dbReference>
<dbReference type="HAMAP" id="MF_01470">
    <property type="entry name" value="Cas1"/>
    <property type="match status" value="1"/>
</dbReference>
<dbReference type="InterPro" id="IPR002729">
    <property type="entry name" value="CRISPR-assoc_Cas1"/>
</dbReference>
<dbReference type="InterPro" id="IPR042206">
    <property type="entry name" value="CRISPR-assoc_Cas1_C"/>
</dbReference>
<dbReference type="InterPro" id="IPR019858">
    <property type="entry name" value="CRISPR-assoc_Cas1_HMARI/TNEAP"/>
</dbReference>
<dbReference type="InterPro" id="IPR042211">
    <property type="entry name" value="CRISPR-assoc_Cas1_N"/>
</dbReference>
<dbReference type="NCBIfam" id="TIGR00287">
    <property type="entry name" value="cas1"/>
    <property type="match status" value="1"/>
</dbReference>
<dbReference type="NCBIfam" id="TIGR03641">
    <property type="entry name" value="cas1_HMARI"/>
    <property type="match status" value="1"/>
</dbReference>
<dbReference type="PANTHER" id="PTHR43219">
    <property type="entry name" value="CRISPR-ASSOCIATED ENDONUCLEASE CAS1"/>
    <property type="match status" value="1"/>
</dbReference>
<dbReference type="PANTHER" id="PTHR43219:SF2">
    <property type="entry name" value="CRISPR-ASSOCIATED ENDONUCLEASE CAS1"/>
    <property type="match status" value="1"/>
</dbReference>
<dbReference type="Pfam" id="PF01867">
    <property type="entry name" value="Cas_Cas1"/>
    <property type="match status" value="1"/>
</dbReference>
<feature type="chain" id="PRO_0000417106" description="CRISPR-associated endonuclease Cas1">
    <location>
        <begin position="1"/>
        <end position="333"/>
    </location>
</feature>
<feature type="binding site" evidence="1">
    <location>
        <position position="162"/>
    </location>
    <ligand>
        <name>Mn(2+)</name>
        <dbReference type="ChEBI" id="CHEBI:29035"/>
    </ligand>
</feature>
<feature type="binding site" evidence="1">
    <location>
        <position position="226"/>
    </location>
    <ligand>
        <name>Mn(2+)</name>
        <dbReference type="ChEBI" id="CHEBI:29035"/>
    </ligand>
</feature>
<feature type="binding site" evidence="1">
    <location>
        <position position="241"/>
    </location>
    <ligand>
        <name>Mn(2+)</name>
        <dbReference type="ChEBI" id="CHEBI:29035"/>
    </ligand>
</feature>
<protein>
    <recommendedName>
        <fullName evidence="1">CRISPR-associated endonuclease Cas1</fullName>
        <ecNumber evidence="1">3.1.-.-</ecNumber>
    </recommendedName>
</protein>